<dbReference type="EC" id="4.2.1.49" evidence="1"/>
<dbReference type="EMBL" id="CP000444">
    <property type="protein sequence ID" value="ABI41100.1"/>
    <property type="molecule type" value="Genomic_DNA"/>
</dbReference>
<dbReference type="SMR" id="Q0I0K5"/>
<dbReference type="KEGG" id="shm:Shewmr7_0094"/>
<dbReference type="HOGENOM" id="CLU_018868_0_1_6"/>
<dbReference type="UniPathway" id="UPA00379">
    <property type="reaction ID" value="UER00550"/>
</dbReference>
<dbReference type="GO" id="GO:0005737">
    <property type="term" value="C:cytoplasm"/>
    <property type="evidence" value="ECO:0007669"/>
    <property type="project" value="UniProtKB-SubCell"/>
</dbReference>
<dbReference type="GO" id="GO:0016153">
    <property type="term" value="F:urocanate hydratase activity"/>
    <property type="evidence" value="ECO:0007669"/>
    <property type="project" value="UniProtKB-UniRule"/>
</dbReference>
<dbReference type="GO" id="GO:0019556">
    <property type="term" value="P:L-histidine catabolic process to glutamate and formamide"/>
    <property type="evidence" value="ECO:0007669"/>
    <property type="project" value="UniProtKB-UniPathway"/>
</dbReference>
<dbReference type="GO" id="GO:0019557">
    <property type="term" value="P:L-histidine catabolic process to glutamate and formate"/>
    <property type="evidence" value="ECO:0007669"/>
    <property type="project" value="UniProtKB-UniPathway"/>
</dbReference>
<dbReference type="FunFam" id="3.40.50.10730:FF:000001">
    <property type="entry name" value="Urocanate hydratase"/>
    <property type="match status" value="1"/>
</dbReference>
<dbReference type="Gene3D" id="3.40.50.10730">
    <property type="entry name" value="Urocanase like domains"/>
    <property type="match status" value="1"/>
</dbReference>
<dbReference type="Gene3D" id="3.40.1770.10">
    <property type="entry name" value="Urocanase superfamily"/>
    <property type="match status" value="1"/>
</dbReference>
<dbReference type="HAMAP" id="MF_00577">
    <property type="entry name" value="HutU"/>
    <property type="match status" value="1"/>
</dbReference>
<dbReference type="InterPro" id="IPR055351">
    <property type="entry name" value="Urocanase"/>
</dbReference>
<dbReference type="InterPro" id="IPR023637">
    <property type="entry name" value="Urocanase-like"/>
</dbReference>
<dbReference type="InterPro" id="IPR035401">
    <property type="entry name" value="Urocanase_C"/>
</dbReference>
<dbReference type="InterPro" id="IPR038364">
    <property type="entry name" value="Urocanase_central_sf"/>
</dbReference>
<dbReference type="InterPro" id="IPR023636">
    <property type="entry name" value="Urocanase_CS"/>
</dbReference>
<dbReference type="InterPro" id="IPR035400">
    <property type="entry name" value="Urocanase_N"/>
</dbReference>
<dbReference type="InterPro" id="IPR035085">
    <property type="entry name" value="Urocanase_Rossmann-like"/>
</dbReference>
<dbReference type="InterPro" id="IPR036190">
    <property type="entry name" value="Urocanase_sf"/>
</dbReference>
<dbReference type="NCBIfam" id="TIGR01228">
    <property type="entry name" value="hutU"/>
    <property type="match status" value="1"/>
</dbReference>
<dbReference type="NCBIfam" id="NF003820">
    <property type="entry name" value="PRK05414.1"/>
    <property type="match status" value="1"/>
</dbReference>
<dbReference type="PANTHER" id="PTHR12216">
    <property type="entry name" value="UROCANATE HYDRATASE"/>
    <property type="match status" value="1"/>
</dbReference>
<dbReference type="PANTHER" id="PTHR12216:SF4">
    <property type="entry name" value="UROCANATE HYDRATASE"/>
    <property type="match status" value="1"/>
</dbReference>
<dbReference type="Pfam" id="PF01175">
    <property type="entry name" value="Urocanase"/>
    <property type="match status" value="1"/>
</dbReference>
<dbReference type="Pfam" id="PF17392">
    <property type="entry name" value="Urocanase_C"/>
    <property type="match status" value="1"/>
</dbReference>
<dbReference type="Pfam" id="PF17391">
    <property type="entry name" value="Urocanase_N"/>
    <property type="match status" value="1"/>
</dbReference>
<dbReference type="PIRSF" id="PIRSF001423">
    <property type="entry name" value="Urocanate_hydrat"/>
    <property type="match status" value="1"/>
</dbReference>
<dbReference type="SUPFAM" id="SSF111326">
    <property type="entry name" value="Urocanase"/>
    <property type="match status" value="1"/>
</dbReference>
<dbReference type="PROSITE" id="PS01233">
    <property type="entry name" value="UROCANASE"/>
    <property type="match status" value="1"/>
</dbReference>
<keyword id="KW-0963">Cytoplasm</keyword>
<keyword id="KW-0369">Histidine metabolism</keyword>
<keyword id="KW-0456">Lyase</keyword>
<keyword id="KW-0520">NAD</keyword>
<sequence length="556" mass="60283">MDKRHDPSRRIIAPHGSQLSCKSWLTEAPMRMLMNNLHPDVAERPEDLVVYGGIGRAARDWDCYDKIIEVLKRLEDDETLMVQSGKPVGVFRTHADAPRVLIANSNLVPHWANWEHFNELDKQGLAMYGQMTAGSWIYIGTQGIVQGTYETFVAVAKQHFGGVAAGKWILTGGLGGMGGAQTLAGTMAGFSVLACEVDETRIDFRLRTRYVDKKATSLDEALAMINDANASGKPVSVGLLANAADVFAELVKRGITPDVVTDQTSAHDPLNGYLPQGWTMAQAADMRKTDEAAVVKAAKASMAVQVQAMLDLQAAGAATLDYGNNIRQMAFETGVKNAFDFPGFVPAYIRPLFCEGIGPFRWVALSGDPEDIYKTDAKVKELIPDNPHLHNWLDMARERIAFQGLPARICWVGLKDRARLAQAFNEMVKNGELSAPIVIGRDHLDSGSVASPNRETESMMDGSDAVSDWPLLNALLNTASGATWVSLHHGGGVGMGFSQHSGVVIVCDGTEAAAKRVGRVLWNDPATGVMRHADAGYEIAKNCAKEQGLDLPMLKD</sequence>
<feature type="chain" id="PRO_1000025154" description="Urocanate hydratase">
    <location>
        <begin position="1"/>
        <end position="556"/>
    </location>
</feature>
<feature type="active site" evidence="1">
    <location>
        <position position="410"/>
    </location>
</feature>
<feature type="binding site" evidence="1">
    <location>
        <begin position="52"/>
        <end position="53"/>
    </location>
    <ligand>
        <name>NAD(+)</name>
        <dbReference type="ChEBI" id="CHEBI:57540"/>
    </ligand>
</feature>
<feature type="binding site" evidence="1">
    <location>
        <position position="130"/>
    </location>
    <ligand>
        <name>NAD(+)</name>
        <dbReference type="ChEBI" id="CHEBI:57540"/>
    </ligand>
</feature>
<feature type="binding site" evidence="1">
    <location>
        <begin position="176"/>
        <end position="178"/>
    </location>
    <ligand>
        <name>NAD(+)</name>
        <dbReference type="ChEBI" id="CHEBI:57540"/>
    </ligand>
</feature>
<feature type="binding site" evidence="1">
    <location>
        <position position="196"/>
    </location>
    <ligand>
        <name>NAD(+)</name>
        <dbReference type="ChEBI" id="CHEBI:57540"/>
    </ligand>
</feature>
<feature type="binding site" evidence="1">
    <location>
        <position position="201"/>
    </location>
    <ligand>
        <name>NAD(+)</name>
        <dbReference type="ChEBI" id="CHEBI:57540"/>
    </ligand>
</feature>
<feature type="binding site" evidence="1">
    <location>
        <begin position="242"/>
        <end position="243"/>
    </location>
    <ligand>
        <name>NAD(+)</name>
        <dbReference type="ChEBI" id="CHEBI:57540"/>
    </ligand>
</feature>
<feature type="binding site" evidence="1">
    <location>
        <begin position="263"/>
        <end position="267"/>
    </location>
    <ligand>
        <name>NAD(+)</name>
        <dbReference type="ChEBI" id="CHEBI:57540"/>
    </ligand>
</feature>
<feature type="binding site" evidence="1">
    <location>
        <begin position="273"/>
        <end position="274"/>
    </location>
    <ligand>
        <name>NAD(+)</name>
        <dbReference type="ChEBI" id="CHEBI:57540"/>
    </ligand>
</feature>
<feature type="binding site" evidence="1">
    <location>
        <position position="322"/>
    </location>
    <ligand>
        <name>NAD(+)</name>
        <dbReference type="ChEBI" id="CHEBI:57540"/>
    </ligand>
</feature>
<feature type="binding site" evidence="1">
    <location>
        <position position="492"/>
    </location>
    <ligand>
        <name>NAD(+)</name>
        <dbReference type="ChEBI" id="CHEBI:57540"/>
    </ligand>
</feature>
<gene>
    <name evidence="1" type="primary">hutU</name>
    <name type="ordered locus">Shewmr7_0094</name>
</gene>
<reference key="1">
    <citation type="submission" date="2006-08" db="EMBL/GenBank/DDBJ databases">
        <title>Complete sequence of chromosome 1 of Shewanella sp. MR-7.</title>
        <authorList>
            <person name="Copeland A."/>
            <person name="Lucas S."/>
            <person name="Lapidus A."/>
            <person name="Barry K."/>
            <person name="Detter J.C."/>
            <person name="Glavina del Rio T."/>
            <person name="Hammon N."/>
            <person name="Israni S."/>
            <person name="Dalin E."/>
            <person name="Tice H."/>
            <person name="Pitluck S."/>
            <person name="Kiss H."/>
            <person name="Brettin T."/>
            <person name="Bruce D."/>
            <person name="Han C."/>
            <person name="Tapia R."/>
            <person name="Gilna P."/>
            <person name="Schmutz J."/>
            <person name="Larimer F."/>
            <person name="Land M."/>
            <person name="Hauser L."/>
            <person name="Kyrpides N."/>
            <person name="Mikhailova N."/>
            <person name="Nealson K."/>
            <person name="Konstantinidis K."/>
            <person name="Klappenbach J."/>
            <person name="Tiedje J."/>
            <person name="Richardson P."/>
        </authorList>
    </citation>
    <scope>NUCLEOTIDE SEQUENCE [LARGE SCALE GENOMIC DNA]</scope>
    <source>
        <strain>MR-7</strain>
    </source>
</reference>
<name>HUTU_SHESR</name>
<organism>
    <name type="scientific">Shewanella sp. (strain MR-7)</name>
    <dbReference type="NCBI Taxonomy" id="60481"/>
    <lineage>
        <taxon>Bacteria</taxon>
        <taxon>Pseudomonadati</taxon>
        <taxon>Pseudomonadota</taxon>
        <taxon>Gammaproteobacteria</taxon>
        <taxon>Alteromonadales</taxon>
        <taxon>Shewanellaceae</taxon>
        <taxon>Shewanella</taxon>
    </lineage>
</organism>
<evidence type="ECO:0000255" key="1">
    <source>
        <dbReference type="HAMAP-Rule" id="MF_00577"/>
    </source>
</evidence>
<proteinExistence type="inferred from homology"/>
<protein>
    <recommendedName>
        <fullName evidence="1">Urocanate hydratase</fullName>
        <shortName evidence="1">Urocanase</shortName>
        <ecNumber evidence="1">4.2.1.49</ecNumber>
    </recommendedName>
    <alternativeName>
        <fullName evidence="1">Imidazolonepropionate hydrolase</fullName>
    </alternativeName>
</protein>
<comment type="function">
    <text evidence="1">Catalyzes the conversion of urocanate to 4-imidazolone-5-propionate.</text>
</comment>
<comment type="catalytic activity">
    <reaction evidence="1">
        <text>4-imidazolone-5-propanoate = trans-urocanate + H2O</text>
        <dbReference type="Rhea" id="RHEA:13101"/>
        <dbReference type="ChEBI" id="CHEBI:15377"/>
        <dbReference type="ChEBI" id="CHEBI:17771"/>
        <dbReference type="ChEBI" id="CHEBI:77893"/>
        <dbReference type="EC" id="4.2.1.49"/>
    </reaction>
</comment>
<comment type="cofactor">
    <cofactor evidence="1">
        <name>NAD(+)</name>
        <dbReference type="ChEBI" id="CHEBI:57540"/>
    </cofactor>
    <text evidence="1">Binds 1 NAD(+) per subunit.</text>
</comment>
<comment type="pathway">
    <text evidence="1">Amino-acid degradation; L-histidine degradation into L-glutamate; N-formimidoyl-L-glutamate from L-histidine: step 2/3.</text>
</comment>
<comment type="subcellular location">
    <subcellularLocation>
        <location evidence="1">Cytoplasm</location>
    </subcellularLocation>
</comment>
<comment type="similarity">
    <text evidence="1">Belongs to the urocanase family.</text>
</comment>
<accession>Q0I0K5</accession>